<organism>
    <name type="scientific">Mus musculus</name>
    <name type="common">Mouse</name>
    <dbReference type="NCBI Taxonomy" id="10090"/>
    <lineage>
        <taxon>Eukaryota</taxon>
        <taxon>Metazoa</taxon>
        <taxon>Chordata</taxon>
        <taxon>Craniata</taxon>
        <taxon>Vertebrata</taxon>
        <taxon>Euteleostomi</taxon>
        <taxon>Mammalia</taxon>
        <taxon>Eutheria</taxon>
        <taxon>Euarchontoglires</taxon>
        <taxon>Glires</taxon>
        <taxon>Rodentia</taxon>
        <taxon>Myomorpha</taxon>
        <taxon>Muroidea</taxon>
        <taxon>Muridae</taxon>
        <taxon>Murinae</taxon>
        <taxon>Mus</taxon>
        <taxon>Mus</taxon>
    </lineage>
</organism>
<keyword id="KW-0007">Acetylation</keyword>
<keyword id="KW-0009">Actin-binding</keyword>
<keyword id="KW-0877">Alternative promoter usage</keyword>
<keyword id="KW-0965">Cell junction</keyword>
<keyword id="KW-1003">Cell membrane</keyword>
<keyword id="KW-0966">Cell projection</keyword>
<keyword id="KW-0153">Cholesterol metabolism</keyword>
<keyword id="KW-0963">Cytoplasm</keyword>
<keyword id="KW-0206">Cytoskeleton</keyword>
<keyword id="KW-0440">LIM domain</keyword>
<keyword id="KW-0443">Lipid metabolism</keyword>
<keyword id="KW-0472">Membrane</keyword>
<keyword id="KW-0479">Metal-binding</keyword>
<keyword id="KW-0597">Phosphoprotein</keyword>
<keyword id="KW-1185">Reference proteome</keyword>
<keyword id="KW-0753">Steroid metabolism</keyword>
<keyword id="KW-1207">Sterol metabolism</keyword>
<keyword id="KW-0832">Ubl conjugation</keyword>
<keyword id="KW-0862">Zinc</keyword>
<feature type="chain" id="PRO_0000075731" description="LIM domain and actin-binding protein 1">
    <location>
        <begin position="1"/>
        <end position="753"/>
    </location>
</feature>
<feature type="domain" description="LIM zinc-binding" evidence="2">
    <location>
        <begin position="386"/>
        <end position="446"/>
    </location>
</feature>
<feature type="region of interest" description="Disordered" evidence="3">
    <location>
        <begin position="46"/>
        <end position="66"/>
    </location>
</feature>
<feature type="region of interest" description="Disordered" evidence="3">
    <location>
        <begin position="82"/>
        <end position="186"/>
    </location>
</feature>
<feature type="region of interest" description="Disordered" evidence="3">
    <location>
        <begin position="276"/>
        <end position="326"/>
    </location>
</feature>
<feature type="region of interest" description="Disordered" evidence="3">
    <location>
        <begin position="341"/>
        <end position="379"/>
    </location>
</feature>
<feature type="region of interest" description="Disordered" evidence="3">
    <location>
        <begin position="467"/>
        <end position="493"/>
    </location>
</feature>
<feature type="region of interest" description="Required for interaction with MYO5B" evidence="5">
    <location>
        <begin position="491"/>
        <end position="511"/>
    </location>
</feature>
<feature type="region of interest" description="Disordered" evidence="3">
    <location>
        <begin position="505"/>
        <end position="669"/>
    </location>
</feature>
<feature type="region of interest" description="Disordered" evidence="3">
    <location>
        <begin position="682"/>
        <end position="703"/>
    </location>
</feature>
<feature type="short sequence motif" description="Required for interaction with NPC1L1" evidence="5">
    <location>
        <begin position="164"/>
        <end position="166"/>
    </location>
</feature>
<feature type="compositionally biased region" description="Basic and acidic residues" evidence="3">
    <location>
        <begin position="46"/>
        <end position="56"/>
    </location>
</feature>
<feature type="compositionally biased region" description="Basic and acidic residues" evidence="3">
    <location>
        <begin position="143"/>
        <end position="152"/>
    </location>
</feature>
<feature type="compositionally biased region" description="Basic and acidic residues" evidence="3">
    <location>
        <begin position="167"/>
        <end position="177"/>
    </location>
</feature>
<feature type="compositionally biased region" description="Polar residues" evidence="3">
    <location>
        <begin position="278"/>
        <end position="291"/>
    </location>
</feature>
<feature type="compositionally biased region" description="Basic and acidic residues" evidence="3">
    <location>
        <begin position="292"/>
        <end position="305"/>
    </location>
</feature>
<feature type="compositionally biased region" description="Polar residues" evidence="3">
    <location>
        <begin position="342"/>
        <end position="351"/>
    </location>
</feature>
<feature type="compositionally biased region" description="Polar residues" evidence="3">
    <location>
        <begin position="363"/>
        <end position="375"/>
    </location>
</feature>
<feature type="compositionally biased region" description="Basic and acidic residues" evidence="3">
    <location>
        <begin position="512"/>
        <end position="525"/>
    </location>
</feature>
<feature type="compositionally biased region" description="Basic and acidic residues" evidence="3">
    <location>
        <begin position="554"/>
        <end position="565"/>
    </location>
</feature>
<feature type="compositionally biased region" description="Low complexity" evidence="3">
    <location>
        <begin position="598"/>
        <end position="609"/>
    </location>
</feature>
<feature type="compositionally biased region" description="Basic and acidic residues" evidence="3">
    <location>
        <begin position="630"/>
        <end position="666"/>
    </location>
</feature>
<feature type="modified residue" description="N-acetylmethionine" evidence="1">
    <location>
        <position position="1"/>
    </location>
</feature>
<feature type="modified residue" description="Phosphoserine" evidence="1">
    <location>
        <position position="15"/>
    </location>
</feature>
<feature type="modified residue" description="Phosphoserine" evidence="12">
    <location>
        <position position="132"/>
    </location>
</feature>
<feature type="modified residue" description="Phosphoserine" evidence="8 11 12">
    <location>
        <position position="225"/>
    </location>
</feature>
<feature type="modified residue" description="Phosphoserine" evidence="8 12">
    <location>
        <position position="230"/>
    </location>
</feature>
<feature type="modified residue" description="Phosphoserine" evidence="12">
    <location>
        <position position="242"/>
    </location>
</feature>
<feature type="modified residue" description="Phosphoserine" evidence="1">
    <location>
        <position position="263"/>
    </location>
</feature>
<feature type="modified residue" description="Phosphoserine" evidence="1">
    <location>
        <position position="348"/>
    </location>
</feature>
<feature type="modified residue" description="Phosphoserine" evidence="4 8">
    <location>
        <position position="360"/>
    </location>
</feature>
<feature type="modified residue" description="Phosphoserine" evidence="1">
    <location>
        <position position="367"/>
    </location>
</feature>
<feature type="modified residue" description="Phosphoserine" evidence="1">
    <location>
        <position position="372"/>
    </location>
</feature>
<feature type="modified residue" description="N6-succinyllysine" evidence="13">
    <location>
        <position position="437"/>
    </location>
</feature>
<feature type="modified residue" description="Phosphoserine" evidence="12">
    <location>
        <position position="467"/>
    </location>
</feature>
<feature type="modified residue" description="Phosphoserine" evidence="8 12">
    <location>
        <position position="485"/>
    </location>
</feature>
<feature type="modified residue" description="Phosphoserine" evidence="8 9 10 11 12">
    <location>
        <position position="488"/>
    </location>
</feature>
<feature type="modified residue" description="Phosphoserine" evidence="1">
    <location>
        <position position="599"/>
    </location>
</feature>
<feature type="modified residue" description="Phosphoserine" evidence="4">
    <location>
        <position position="602"/>
    </location>
</feature>
<feature type="modified residue" description="Phosphoserine" evidence="1">
    <location>
        <position position="607"/>
    </location>
</feature>
<feature type="modified residue" description="Phosphoserine" evidence="12">
    <location>
        <position position="615"/>
    </location>
</feature>
<feature type="modified residue" description="Phosphoserine" evidence="4">
    <location>
        <position position="692"/>
    </location>
</feature>
<feature type="modified residue" description="Phosphoserine" evidence="12">
    <location>
        <position position="720"/>
    </location>
</feature>
<feature type="modified residue" description="Phosphoserine" evidence="12">
    <location>
        <position position="735"/>
    </location>
</feature>
<feature type="splice variant" id="VSP_003118" description="In isoform Alpha." evidence="6">
    <location>
        <begin position="1"/>
        <end position="160"/>
    </location>
</feature>
<feature type="mutagenesis site" description="Decreases interaction with NPC1L1." evidence="5">
    <original>CLG</original>
    <variation>AAA</variation>
    <location>
        <begin position="164"/>
        <end position="166"/>
    </location>
</feature>
<feature type="mutagenesis site" description="Abolished phosphorylation by MAPK1/MAPK3." evidence="4">
    <original>S</original>
    <variation>A</variation>
    <location>
        <position position="360"/>
    </location>
</feature>
<feature type="mutagenesis site" description="Reduced phosphorylation by MAPK1/MAPK3." evidence="4">
    <original>S</original>
    <variation>A</variation>
    <location>
        <position position="602"/>
    </location>
</feature>
<feature type="mutagenesis site" description="Reduced phosphorylation by MAPK1/MAPK3." evidence="4">
    <original>S</original>
    <variation>A</variation>
    <location>
        <position position="692"/>
    </location>
</feature>
<feature type="sequence conflict" description="In Ref. 1; AAG31148." evidence="7" ref="1">
    <original>S</original>
    <variation>N</variation>
    <location>
        <position position="216"/>
    </location>
</feature>
<feature type="sequence conflict" description="In Ref. 1; AAG31147." evidence="7" ref="1">
    <original>T</original>
    <variation>A</variation>
    <location>
        <position position="325"/>
    </location>
</feature>
<feature type="sequence conflict" description="In Ref. 1; AAG31147." evidence="7" ref="1">
    <original>P</original>
    <variation>S</variation>
    <location>
        <position position="486"/>
    </location>
</feature>
<feature type="sequence conflict" description="In Ref. 1; AAG31147." evidence="7" ref="1">
    <original>V</original>
    <variation>A</variation>
    <location>
        <position position="499"/>
    </location>
</feature>
<feature type="sequence conflict" description="In Ref. 1; AAG31147." evidence="7" ref="1">
    <original>G</original>
    <variation>S</variation>
    <location>
        <position position="538"/>
    </location>
</feature>
<feature type="sequence conflict" description="In Ref. 1; AAG31147." evidence="7" ref="1">
    <original>A</original>
    <variation>T</variation>
    <location>
        <position position="605"/>
    </location>
</feature>
<name>LIMA1_MOUSE</name>
<proteinExistence type="evidence at protein level"/>
<accession>Q9ERG0</accession>
<accession>Q8K2H0</accession>
<accession>Q9ERG1</accession>
<comment type="function">
    <text evidence="1 5">Actin-binding protein involved in actin cytoskeleton regulation and dynamics. Increases the number and size of actin stress fibers and inhibits membrane ruffling. Inhibits actin filament depolymerization. Bundles actin filaments, delays filament nucleation and reduces formation of branched filaments (By similarity). Acts as a negative regulator of primary cilium formation (By similarity). Plays a role in cholesterol homeostasis. Influences plasma cholesterol levels through regulation of intestinal cholesterol absorption. May act as a scaffold protein by regulating NPC1L1 transportation, an essential protein for cholesterol absorption, to the plasma membrane by recruiting MYO5B to NPC1L1, and thus facilitates cholesterol uptake (PubMed:29880681).</text>
</comment>
<comment type="subunit">
    <text evidence="1 4 5">Interacts with NPC1L1; bridges NPC1L1 with MYO5B (PubMed:29880681). Interacts with MYO5B; bridges MYO5B with NPC1L1 (PubMed:29880681). Interacts with PXN; this complex stabilizes actin dynamics (By similarity). Binds to G-actin and F-actin (By similarity) (PubMed:17875928). Interacts with LUZP1 (via C-terminus); both proteins restrict ciliation and may work together to regulate this process (By similarity). Binds RAB40B (GTP-bound); interaction influences LIMA1 subcellular localization in lamellipodia during cell migration (By similarity).</text>
</comment>
<comment type="interaction">
    <interactant intactId="EBI-15677021">
        <id>Q9ERG0-2</id>
    </interactant>
    <interactant intactId="EBI-701918">
        <id>P35221</id>
        <label>CTNNA1</label>
    </interactant>
    <organismsDiffer>true</organismsDiffer>
    <experiments>2</experiments>
</comment>
<comment type="interaction">
    <interactant intactId="EBI-15677021">
        <id>Q9ERG0-2</id>
    </interactant>
    <interactant intactId="EBI-7053242">
        <id>P35221-1</id>
        <label>CTNNA1</label>
    </interactant>
    <organismsDiffer>true</organismsDiffer>
    <experiments>2</experiments>
</comment>
<comment type="subcellular location">
    <subcellularLocation>
        <location>Cytoplasm</location>
    </subcellularLocation>
    <subcellularLocation>
        <location evidence="1">Cell junction</location>
        <location evidence="1">Focal adhesion</location>
    </subcellularLocation>
    <subcellularLocation>
        <location evidence="1">Cytoplasm</location>
        <location evidence="1">Cytoskeleton</location>
    </subcellularLocation>
    <subcellularLocation>
        <location evidence="4">Cytoplasm</location>
        <location evidence="4">Cytoskeleton</location>
        <location evidence="4">Stress fiber</location>
    </subcellularLocation>
    <subcellularLocation>
        <location evidence="5">Cell membrane</location>
    </subcellularLocation>
    <subcellularLocation>
        <location evidence="4">Cell projection</location>
        <location evidence="4">Ruffle</location>
    </subcellularLocation>
    <subcellularLocation>
        <location evidence="1">Cell projection</location>
        <location evidence="1">Lamellipodium</location>
    </subcellularLocation>
    <text evidence="1 4 5">Expressed mainly in the brush border membrane of the small intestine and colocalizes with NPC1L1 and MYO5B (PubMed:29880681). Colocalizes with PXN at focal adhesions in mesangial cells (By similarity). Colocalizes with actin stress fibers in quiescent cells. PDGF stimulation induced disassembly of stress fibers and formation of peripheral and dorsal ruffles, where LIMA1 is relocalized (PubMed:17875928). Localized at the lamellipodia, just behind lamellipodia actin ruffles (By similarity).</text>
</comment>
<comment type="alternative products">
    <event type="alternative promoter"/>
    <isoform>
        <id>Q9ERG0-1</id>
        <name>Beta</name>
        <sequence type="displayed"/>
    </isoform>
    <isoform>
        <id>Q9ERG0-2</id>
        <name>Alpha</name>
        <sequence type="described" ref="VSP_003118"/>
    </isoform>
</comment>
<comment type="tissue specificity">
    <text evidence="5">Highly expressed in the small intestine, including the duodenum, jejunum, and ileum. Low expression in the liver and very low expressed in the heart, spleen, lung, brain, and pancreas (PubMed:29880681). Isoform Alpha is highly expressed in embryos from day 7-11 and in adult spleen and lung. Isoform Beta expression is highest in adult kidney, testis, lung and liver, intermediate in heart, brain, spleen, skeletal muscle and low in embryos.</text>
</comment>
<comment type="domain">
    <text evidence="1">Contains at least 2 actin-binding domains, one on each side of the LIM domain. Both domains bind actin monomers and filaments. The C-terminal domain binds filaments more efficiently than the N-terminus (By similarity).</text>
</comment>
<comment type="PTM">
    <text evidence="4">Phosphorylation of the C-terminal region by MAPK1/MAPK3 reduces its association with F-actin and contributes to actin filament reorganization and enhances cell motility.</text>
</comment>
<comment type="PTM">
    <text evidence="1">Ubiquitinated by the ECS(RAB40B) complex leading to its degradation.</text>
</comment>
<comment type="disruption phenotype">
    <text evidence="5">Deficient mice display reduced dietary cholesterol absorption.</text>
</comment>
<reference key="1">
    <citation type="journal article" date="2001" name="Gene">
        <title>Characterization of mouse epithelial protein lost in neoplasm (EPLIN) and comparison of mammalian and zebrafish EPLIN.</title>
        <authorList>
            <person name="Maul R.S."/>
            <person name="Sachi Gerbin C."/>
            <person name="Chang D.D."/>
        </authorList>
    </citation>
    <scope>NUCLEOTIDE SEQUENCE [MRNA] (ISOFORMS ALPHA AND BETA)</scope>
</reference>
<reference key="2">
    <citation type="submission" date="2005-07" db="EMBL/GenBank/DDBJ databases">
        <authorList>
            <person name="Mural R.J."/>
            <person name="Adams M.D."/>
            <person name="Myers E.W."/>
            <person name="Smith H.O."/>
            <person name="Venter J.C."/>
        </authorList>
    </citation>
    <scope>NUCLEOTIDE SEQUENCE [LARGE SCALE GENOMIC DNA]</scope>
</reference>
<reference key="3">
    <citation type="journal article" date="2004" name="Genome Res.">
        <title>The status, quality, and expansion of the NIH full-length cDNA project: the Mammalian Gene Collection (MGC).</title>
        <authorList>
            <consortium name="The MGC Project Team"/>
        </authorList>
    </citation>
    <scope>NUCLEOTIDE SEQUENCE [LARGE SCALE MRNA]</scope>
    <source>
        <strain>FVB/N</strain>
        <tissue>Mammary tumor</tissue>
    </source>
</reference>
<reference key="4">
    <citation type="journal article" date="2007" name="Mol. Cell. Biol.">
        <title>Extracellular signal-regulated kinase/mitogen-activated protein kinase regulates actin organization and cell motility by phosphorylating the actin cross-linking protein EPLIN.</title>
        <authorList>
            <person name="Han M.Y."/>
            <person name="Kosako H."/>
            <person name="Watanabe T."/>
            <person name="Hattori S."/>
        </authorList>
    </citation>
    <scope>PHOSPHORYLATION AT SER-360; SER-602 AND SER-692 BY MAPK1/MAPK3</scope>
    <scope>SUBCELLULAR LOCATION</scope>
    <scope>MUTAGENESIS OF SER-360; SER-602 AND SER-692</scope>
    <scope>INTERACTION WITH F-ACTIN</scope>
</reference>
<reference key="5">
    <citation type="journal article" date="2007" name="Proc. Natl. Acad. Sci. U.S.A.">
        <title>Large-scale phosphorylation analysis of mouse liver.</title>
        <authorList>
            <person name="Villen J."/>
            <person name="Beausoleil S.A."/>
            <person name="Gerber S.A."/>
            <person name="Gygi S.P."/>
        </authorList>
    </citation>
    <scope>PHOSPHORYLATION [LARGE SCALE ANALYSIS] AT SER-225; SER-230; SER-360; SER-485 AND SER-488</scope>
    <scope>IDENTIFICATION BY MASS SPECTROMETRY [LARGE SCALE ANALYSIS]</scope>
    <source>
        <tissue>Liver</tissue>
    </source>
</reference>
<reference key="6">
    <citation type="journal article" date="2008" name="J. Proteome Res.">
        <title>Specific phosphopeptide enrichment with immobilized titanium ion affinity chromatography adsorbent for phosphoproteome analysis.</title>
        <authorList>
            <person name="Zhou H."/>
            <person name="Ye M."/>
            <person name="Dong J."/>
            <person name="Han G."/>
            <person name="Jiang X."/>
            <person name="Wu R."/>
            <person name="Zou H."/>
        </authorList>
    </citation>
    <scope>PHOSPHORYLATION [LARGE SCALE ANALYSIS] AT SER-488</scope>
    <scope>IDENTIFICATION BY MASS SPECTROMETRY [LARGE SCALE ANALYSIS]</scope>
    <source>
        <tissue>Liver</tissue>
    </source>
</reference>
<reference key="7">
    <citation type="journal article" date="2009" name="Immunity">
        <title>The phagosomal proteome in interferon-gamma-activated macrophages.</title>
        <authorList>
            <person name="Trost M."/>
            <person name="English L."/>
            <person name="Lemieux S."/>
            <person name="Courcelles M."/>
            <person name="Desjardins M."/>
            <person name="Thibault P."/>
        </authorList>
    </citation>
    <scope>PHOSPHORYLATION [LARGE SCALE ANALYSIS] AT SER-225 AND SER-488</scope>
    <scope>IDENTIFICATION BY MASS SPECTROMETRY [LARGE SCALE ANALYSIS]</scope>
</reference>
<reference key="8">
    <citation type="journal article" date="2009" name="Mol. Cell. Proteomics">
        <title>Large scale localization of protein phosphorylation by use of electron capture dissociation mass spectrometry.</title>
        <authorList>
            <person name="Sweet S.M."/>
            <person name="Bailey C.M."/>
            <person name="Cunningham D.L."/>
            <person name="Heath J.K."/>
            <person name="Cooper H.J."/>
        </authorList>
    </citation>
    <scope>PHOSPHORYLATION [LARGE SCALE ANALYSIS] AT SER-488</scope>
    <scope>IDENTIFICATION BY MASS SPECTROMETRY [LARGE SCALE ANALYSIS]</scope>
    <source>
        <tissue>Embryonic fibroblast</tissue>
    </source>
</reference>
<reference key="9">
    <citation type="journal article" date="2010" name="Cell">
        <title>A tissue-specific atlas of mouse protein phosphorylation and expression.</title>
        <authorList>
            <person name="Huttlin E.L."/>
            <person name="Jedrychowski M.P."/>
            <person name="Elias J.E."/>
            <person name="Goswami T."/>
            <person name="Rad R."/>
            <person name="Beausoleil S.A."/>
            <person name="Villen J."/>
            <person name="Haas W."/>
            <person name="Sowa M.E."/>
            <person name="Gygi S.P."/>
        </authorList>
    </citation>
    <scope>PHOSPHORYLATION [LARGE SCALE ANALYSIS] AT SER-132; SER-225; SER-230; SER-242; SER-467; SER-485; SER-488; SER-615; SER-720 AND SER-735</scope>
    <scope>IDENTIFICATION BY MASS SPECTROMETRY [LARGE SCALE ANALYSIS]</scope>
    <source>
        <tissue>Brain</tissue>
        <tissue>Brown adipose tissue</tissue>
        <tissue>Heart</tissue>
        <tissue>Kidney</tissue>
        <tissue>Liver</tissue>
        <tissue>Lung</tissue>
        <tissue>Pancreas</tissue>
        <tissue>Spleen</tissue>
        <tissue>Testis</tissue>
    </source>
</reference>
<reference key="10">
    <citation type="journal article" date="2013" name="Mol. Cell">
        <title>SIRT5-mediated lysine desuccinylation impacts diverse metabolic pathways.</title>
        <authorList>
            <person name="Park J."/>
            <person name="Chen Y."/>
            <person name="Tishkoff D.X."/>
            <person name="Peng C."/>
            <person name="Tan M."/>
            <person name="Dai L."/>
            <person name="Xie Z."/>
            <person name="Zhang Y."/>
            <person name="Zwaans B.M."/>
            <person name="Skinner M.E."/>
            <person name="Lombard D.B."/>
            <person name="Zhao Y."/>
        </authorList>
    </citation>
    <scope>SUCCINYLATION [LARGE SCALE ANALYSIS] AT LYS-437</scope>
    <scope>IDENTIFICATION BY MASS SPECTROMETRY [LARGE SCALE ANALYSIS]</scope>
    <source>
        <tissue>Embryonic fibroblast</tissue>
    </source>
</reference>
<reference key="11">
    <citation type="journal article" date="2018" name="Science">
        <title>A LIMA1 variant promotes low plasma LDL cholesterol and decreases intestinal cholesterol absorption.</title>
        <authorList>
            <person name="Zhang Y.Y."/>
            <person name="Fu Z.Y."/>
            <person name="Wei J."/>
            <person name="Qi W."/>
            <person name="Baituola G."/>
            <person name="Luo J."/>
            <person name="Meng Y.J."/>
            <person name="Guo S.Y."/>
            <person name="Yin H."/>
            <person name="Jiang S.Y."/>
            <person name="Li Y.F."/>
            <person name="Miao H.H."/>
            <person name="Liu Y."/>
            <person name="Wang Y."/>
            <person name="Li B.L."/>
            <person name="Ma Y.T."/>
            <person name="Song B.L."/>
        </authorList>
    </citation>
    <scope>TISSUE SPECIFICITY</scope>
    <scope>SUBCELLULAR LOCATION</scope>
    <scope>FUNCTION</scope>
    <scope>DISRUPTION PHENOTYPE</scope>
    <scope>INTERACTION WITH NPC1L1 AND MYO5B</scope>
    <scope>MUTAGENESIS OF 164-CYS--GLY-166</scope>
    <scope>IDENTIFICATION BY MASS SPECTROMETRY</scope>
    <scope>INTERACTION WITH F-ACTIN</scope>
</reference>
<evidence type="ECO:0000250" key="1">
    <source>
        <dbReference type="UniProtKB" id="Q9UHB6"/>
    </source>
</evidence>
<evidence type="ECO:0000255" key="2">
    <source>
        <dbReference type="PROSITE-ProRule" id="PRU00125"/>
    </source>
</evidence>
<evidence type="ECO:0000256" key="3">
    <source>
        <dbReference type="SAM" id="MobiDB-lite"/>
    </source>
</evidence>
<evidence type="ECO:0000269" key="4">
    <source>
    </source>
</evidence>
<evidence type="ECO:0000269" key="5">
    <source>
    </source>
</evidence>
<evidence type="ECO:0000303" key="6">
    <source>
    </source>
</evidence>
<evidence type="ECO:0000305" key="7"/>
<evidence type="ECO:0007744" key="8">
    <source>
    </source>
</evidence>
<evidence type="ECO:0007744" key="9">
    <source>
    </source>
</evidence>
<evidence type="ECO:0007744" key="10">
    <source>
    </source>
</evidence>
<evidence type="ECO:0007744" key="11">
    <source>
    </source>
</evidence>
<evidence type="ECO:0007744" key="12">
    <source>
    </source>
</evidence>
<evidence type="ECO:0007744" key="13">
    <source>
    </source>
</evidence>
<dbReference type="EMBL" id="AF307844">
    <property type="protein sequence ID" value="AAG31147.1"/>
    <property type="molecule type" value="mRNA"/>
</dbReference>
<dbReference type="EMBL" id="AF307845">
    <property type="protein sequence ID" value="AAG31148.1"/>
    <property type="molecule type" value="mRNA"/>
</dbReference>
<dbReference type="EMBL" id="BC031490">
    <property type="protein sequence ID" value="AAH31490.1"/>
    <property type="molecule type" value="mRNA"/>
</dbReference>
<dbReference type="EMBL" id="CH466550">
    <property type="protein sequence ID" value="EDL04110.1"/>
    <property type="molecule type" value="Genomic_DNA"/>
</dbReference>
<dbReference type="CCDS" id="CCDS37206.1">
    <molecule id="Q9ERG0-2"/>
</dbReference>
<dbReference type="CCDS" id="CCDS49729.1">
    <molecule id="Q9ERG0-1"/>
</dbReference>
<dbReference type="RefSeq" id="NP_001107017.1">
    <molecule id="Q9ERG0-1"/>
    <property type="nucleotide sequence ID" value="NM_001113545.2"/>
</dbReference>
<dbReference type="RefSeq" id="NP_075550.2">
    <molecule id="Q9ERG0-2"/>
    <property type="nucleotide sequence ID" value="NM_023063.5"/>
</dbReference>
<dbReference type="SMR" id="Q9ERG0"/>
<dbReference type="BioGRID" id="211164">
    <property type="interactions" value="140"/>
</dbReference>
<dbReference type="DIP" id="DIP-29634N"/>
<dbReference type="ELM" id="Q9ERG0"/>
<dbReference type="FunCoup" id="Q9ERG0">
    <property type="interactions" value="983"/>
</dbReference>
<dbReference type="IntAct" id="Q9ERG0">
    <property type="interactions" value="136"/>
</dbReference>
<dbReference type="STRING" id="10090.ENSMUSP00000073371"/>
<dbReference type="ChEMBL" id="CHEMBL4879513"/>
<dbReference type="GlyGen" id="Q9ERG0">
    <property type="glycosylation" value="1 site, 1 O-linked glycan (1 site)"/>
</dbReference>
<dbReference type="iPTMnet" id="Q9ERG0"/>
<dbReference type="PhosphoSitePlus" id="Q9ERG0"/>
<dbReference type="SwissPalm" id="Q9ERG0"/>
<dbReference type="jPOST" id="Q9ERG0"/>
<dbReference type="PaxDb" id="10090-ENSMUSP00000073371"/>
<dbReference type="PeptideAtlas" id="Q9ERG0"/>
<dbReference type="ProteomicsDB" id="286199">
    <molecule id="Q9ERG0-1"/>
</dbReference>
<dbReference type="ProteomicsDB" id="286200">
    <molecule id="Q9ERG0-2"/>
</dbReference>
<dbReference type="Pumba" id="Q9ERG0"/>
<dbReference type="Antibodypedia" id="14200">
    <property type="antibodies" value="336 antibodies from 34 providers"/>
</dbReference>
<dbReference type="DNASU" id="65970"/>
<dbReference type="Ensembl" id="ENSMUST00000073691.5">
    <molecule id="Q9ERG0-1"/>
    <property type="protein sequence ID" value="ENSMUSP00000073371.4"/>
    <property type="gene ID" value="ENSMUSG00000023022.15"/>
</dbReference>
<dbReference type="Ensembl" id="ENSMUST00000109024.9">
    <molecule id="Q9ERG0-2"/>
    <property type="protein sequence ID" value="ENSMUSP00000104652.3"/>
    <property type="gene ID" value="ENSMUSG00000023022.15"/>
</dbReference>
<dbReference type="GeneID" id="65970"/>
<dbReference type="KEGG" id="mmu:65970"/>
<dbReference type="UCSC" id="uc007xqh.3">
    <molecule id="Q9ERG0-1"/>
    <property type="organism name" value="mouse"/>
</dbReference>
<dbReference type="AGR" id="MGI:1920992"/>
<dbReference type="CTD" id="51474"/>
<dbReference type="MGI" id="MGI:1920992">
    <property type="gene designation" value="Lima1"/>
</dbReference>
<dbReference type="VEuPathDB" id="HostDB:ENSMUSG00000023022"/>
<dbReference type="eggNOG" id="KOG1700">
    <property type="taxonomic scope" value="Eukaryota"/>
</dbReference>
<dbReference type="GeneTree" id="ENSGT00940000158313"/>
<dbReference type="HOGENOM" id="CLU_021314_0_0_1"/>
<dbReference type="InParanoid" id="Q9ERG0"/>
<dbReference type="OMA" id="NQQVFHV"/>
<dbReference type="OrthoDB" id="6129702at2759"/>
<dbReference type="PhylomeDB" id="Q9ERG0"/>
<dbReference type="TreeFam" id="TF350273"/>
<dbReference type="BioGRID-ORCS" id="65970">
    <property type="hits" value="0 hits in 76 CRISPR screens"/>
</dbReference>
<dbReference type="ChiTaRS" id="Lima1">
    <property type="organism name" value="mouse"/>
</dbReference>
<dbReference type="PRO" id="PR:Q9ERG0"/>
<dbReference type="Proteomes" id="UP000000589">
    <property type="component" value="Chromosome 15"/>
</dbReference>
<dbReference type="RNAct" id="Q9ERG0">
    <property type="molecule type" value="protein"/>
</dbReference>
<dbReference type="Bgee" id="ENSMUSG00000023022">
    <property type="expression patterns" value="Expressed in undifferentiated genital tubercle and 257 other cell types or tissues"/>
</dbReference>
<dbReference type="ExpressionAtlas" id="Q9ERG0">
    <property type="expression patterns" value="baseline and differential"/>
</dbReference>
<dbReference type="GO" id="GO:0015629">
    <property type="term" value="C:actin cytoskeleton"/>
    <property type="evidence" value="ECO:0000314"/>
    <property type="project" value="MGI"/>
</dbReference>
<dbReference type="GO" id="GO:0005884">
    <property type="term" value="C:actin filament"/>
    <property type="evidence" value="ECO:0000250"/>
    <property type="project" value="UniProtKB"/>
</dbReference>
<dbReference type="GO" id="GO:0005903">
    <property type="term" value="C:brush border"/>
    <property type="evidence" value="ECO:0000314"/>
    <property type="project" value="UniProtKB"/>
</dbReference>
<dbReference type="GO" id="GO:0031526">
    <property type="term" value="C:brush border membrane"/>
    <property type="evidence" value="ECO:0000314"/>
    <property type="project" value="UniProtKB"/>
</dbReference>
<dbReference type="GO" id="GO:0032154">
    <property type="term" value="C:cleavage furrow"/>
    <property type="evidence" value="ECO:0000250"/>
    <property type="project" value="UniProtKB"/>
</dbReference>
<dbReference type="GO" id="GO:0005829">
    <property type="term" value="C:cytosol"/>
    <property type="evidence" value="ECO:0007669"/>
    <property type="project" value="Ensembl"/>
</dbReference>
<dbReference type="GO" id="GO:0005925">
    <property type="term" value="C:focal adhesion"/>
    <property type="evidence" value="ECO:0000250"/>
    <property type="project" value="UniProtKB"/>
</dbReference>
<dbReference type="GO" id="GO:0001726">
    <property type="term" value="C:ruffle"/>
    <property type="evidence" value="ECO:0000314"/>
    <property type="project" value="UniProtKB"/>
</dbReference>
<dbReference type="GO" id="GO:0001725">
    <property type="term" value="C:stress fiber"/>
    <property type="evidence" value="ECO:0000250"/>
    <property type="project" value="UniProtKB"/>
</dbReference>
<dbReference type="GO" id="GO:0051015">
    <property type="term" value="F:actin filament binding"/>
    <property type="evidence" value="ECO:0000315"/>
    <property type="project" value="UniProtKB"/>
</dbReference>
<dbReference type="GO" id="GO:0003785">
    <property type="term" value="F:actin monomer binding"/>
    <property type="evidence" value="ECO:0000250"/>
    <property type="project" value="UniProtKB"/>
</dbReference>
<dbReference type="GO" id="GO:0046872">
    <property type="term" value="F:metal ion binding"/>
    <property type="evidence" value="ECO:0007669"/>
    <property type="project" value="UniProtKB-KW"/>
</dbReference>
<dbReference type="GO" id="GO:0051017">
    <property type="term" value="P:actin filament bundle assembly"/>
    <property type="evidence" value="ECO:0000250"/>
    <property type="project" value="UniProtKB"/>
</dbReference>
<dbReference type="GO" id="GO:0016477">
    <property type="term" value="P:cell migration"/>
    <property type="evidence" value="ECO:0000315"/>
    <property type="project" value="UniProtKB"/>
</dbReference>
<dbReference type="GO" id="GO:0042632">
    <property type="term" value="P:cholesterol homeostasis"/>
    <property type="evidence" value="ECO:0000315"/>
    <property type="project" value="UniProtKB"/>
</dbReference>
<dbReference type="GO" id="GO:0008203">
    <property type="term" value="P:cholesterol metabolic process"/>
    <property type="evidence" value="ECO:0007669"/>
    <property type="project" value="UniProtKB-KW"/>
</dbReference>
<dbReference type="GO" id="GO:0030299">
    <property type="term" value="P:intestinal cholesterol absorption"/>
    <property type="evidence" value="ECO:0000315"/>
    <property type="project" value="UniProtKB"/>
</dbReference>
<dbReference type="GO" id="GO:0030835">
    <property type="term" value="P:negative regulation of actin filament depolymerization"/>
    <property type="evidence" value="ECO:0000250"/>
    <property type="project" value="UniProtKB"/>
</dbReference>
<dbReference type="GO" id="GO:1902018">
    <property type="term" value="P:negative regulation of cilium assembly"/>
    <property type="evidence" value="ECO:0000250"/>
    <property type="project" value="UniProtKB"/>
</dbReference>
<dbReference type="GO" id="GO:0031529">
    <property type="term" value="P:ruffle organization"/>
    <property type="evidence" value="ECO:0000315"/>
    <property type="project" value="UniProtKB"/>
</dbReference>
<dbReference type="CDD" id="cd09485">
    <property type="entry name" value="LIM_Eplin_alpha_beta"/>
    <property type="match status" value="1"/>
</dbReference>
<dbReference type="FunFam" id="2.10.110.10:FF:000002">
    <property type="entry name" value="LIM domain and actin-binding 1"/>
    <property type="match status" value="1"/>
</dbReference>
<dbReference type="Gene3D" id="2.10.110.10">
    <property type="entry name" value="Cysteine Rich Protein"/>
    <property type="match status" value="1"/>
</dbReference>
<dbReference type="InterPro" id="IPR028740">
    <property type="entry name" value="EPLIN_Lim_dom"/>
</dbReference>
<dbReference type="InterPro" id="IPR001781">
    <property type="entry name" value="Znf_LIM"/>
</dbReference>
<dbReference type="PANTHER" id="PTHR24206">
    <property type="entry name" value="OS06G0237300 PROTEIN"/>
    <property type="match status" value="1"/>
</dbReference>
<dbReference type="Pfam" id="PF00412">
    <property type="entry name" value="LIM"/>
    <property type="match status" value="1"/>
</dbReference>
<dbReference type="SMART" id="SM00132">
    <property type="entry name" value="LIM"/>
    <property type="match status" value="1"/>
</dbReference>
<dbReference type="SUPFAM" id="SSF57716">
    <property type="entry name" value="Glucocorticoid receptor-like (DNA-binding domain)"/>
    <property type="match status" value="2"/>
</dbReference>
<dbReference type="PROSITE" id="PS00478">
    <property type="entry name" value="LIM_DOMAIN_1"/>
    <property type="match status" value="1"/>
</dbReference>
<dbReference type="PROSITE" id="PS50023">
    <property type="entry name" value="LIM_DOMAIN_2"/>
    <property type="match status" value="1"/>
</dbReference>
<gene>
    <name type="primary">Lima1</name>
    <name type="synonym">D15Ertd366e</name>
    <name evidence="6" type="synonym">Eplin</name>
</gene>
<sequence>MESTPFNRRQWTSLSLRVTAKELSLVNKNKSSAIVEIFSKYQKAAEEANMERKKNNPESLPQHFRRGTLSVLKKKWENPVAGAEFHTDSLPNSSSEGGHTADYPPAEVTDKPAPGVRADREEHTQPKPRFGSRPEAVIQSRYPRSENSHDFKAQATESQKMENCLGDSRHEAEKPETSENTETSGKIEKYNVPLNRLKMMFEKGEHNQTKSLWTQSRNAGGRRLSENNCSLDDWEIGAGHLSSSAFNSEKNESKRNLELPRLSETSIKDRMAKYQAAVSKQSSPASYTNELKTSESKTHKWEQKENVPPGPEACSVHQEGSKVSTTENSLVALSVPAEDDTCNSQVKSEAQQPMHPKPLSPDARTSSLPESSPSKTAKKFQAPAKESCVECQKTVYPMERLLANQQVFHISCFRCSYCNNKLSLGTYASLHGRIYCKPHFNQLFKSKGNYDEGFGHKQHKDLWASKSDNEETLGRPAQPPNAGESPHSPGVEDAPIAKVGVLAASMEAKASSQREREDKPAETKKLRIAWPPPAELGGSGSALEEGIKVSKPKWPPEDDVCKTEAPEDVDLDLKKLRRSSSLKERSRPFTVAASFRTSSIKSPKASSPSLRKGWSESEQSEEFGGGIATMERKQTENARPSGEKENVGKSRWQGEEVPRSKDRSSFELESENFMENGANIAEDDNHVHAQQSPLEPEAPGWSGFVDTTAAKEFTTQNQKSQDVGFWEGEVVRELSVEEQIKRNRYYDEDEDEE</sequence>
<protein>
    <recommendedName>
        <fullName>LIM domain and actin-binding protein 1</fullName>
    </recommendedName>
    <alternativeName>
        <fullName>Epithelial protein lost in neoplasm</fullName>
        <shortName>mEPLIN</shortName>
    </alternativeName>
</protein>